<gene>
    <name type="primary">MYH7</name>
</gene>
<comment type="function">
    <text evidence="3">Myosins are actin-based motor molecules with ATPase activity essential for muscle contraction. Forms regular bipolar thick filaments that, together with actin thin filaments, constitute the fundamental contractile unit of skeletal and cardiac muscle.</text>
</comment>
<comment type="subunit">
    <text evidence="3">Muscle myosin is a hexameric protein that consists of 2 heavy chain subunits (MHC), 2 alkali light chain subunits (MLC) and 2 regulatory light chain subunits (MLC-2). Interacts with ECPAS. Interacts (via C-terminus) with LRRC39.</text>
</comment>
<comment type="subcellular location">
    <subcellularLocation>
        <location evidence="2">Cytoplasm</location>
        <location evidence="2">Myofibril</location>
    </subcellularLocation>
    <subcellularLocation>
        <location evidence="2">Cytoplasm</location>
        <location evidence="2">Myofibril</location>
        <location evidence="2">Sarcomere</location>
    </subcellularLocation>
    <text evidence="2">Thick filaments of the myofibrils.</text>
</comment>
<comment type="domain">
    <text evidence="10">Limited proteolysis of myosin heavy chain produces 1 light meromyosin (LMM) and 1 heavy meromyosin (HMM). HMM can be further cleaved into 2 globular subfragments (S1) and 1 rod-shaped subfragment (S2).</text>
</comment>
<comment type="domain">
    <text evidence="3">The rodlike tail sequence is highly repetitive, showing cycles of a 28-residue repeat pattern composed of 4 heptapeptides, characteristic for alpha-helical coiled coils. Four skip residues (Skip1: Thr-1188, Skip2: Glu-1385, Skip3: Glu-1582 and Skip4: Gly-1807) introduce discontinuities in the coiled-coil heptad repeats. The first three skip residues are structurally comparable and induce a unique local relaxation of the coiled-coil superhelical pitch and the fourth skip residue lies within a highly flexible molecular hinge that is necessary for myosin incorporation in the bare zone of sarcomeres.</text>
</comment>
<comment type="miscellaneous">
    <text>The cardiac alpha isoform is a 'fast' ATPase myosin, while the beta isoform is a 'slow' ATPase.</text>
</comment>
<comment type="similarity">
    <text evidence="10">Belongs to the TRAFAC class myosin-kinesin ATPase superfamily. Myosin family.</text>
</comment>
<comment type="caution">
    <text evidence="10">Represents a conventional myosin. This protein should not be confused with the unconventional myosin-7 (MYO7).</text>
</comment>
<dbReference type="EMBL" id="U75316">
    <property type="protein sequence ID" value="AAB37320.1"/>
    <property type="molecule type" value="mRNA"/>
</dbReference>
<dbReference type="EMBL" id="AB053226">
    <property type="protein sequence ID" value="BAB20630.1"/>
    <property type="molecule type" value="mRNA"/>
</dbReference>
<dbReference type="PIR" id="A59286">
    <property type="entry name" value="A59286"/>
</dbReference>
<dbReference type="RefSeq" id="NP_999020.2">
    <property type="nucleotide sequence ID" value="NM_213855.2"/>
</dbReference>
<dbReference type="PDB" id="7JH7">
    <property type="method" value="EM"/>
    <property type="resolution" value="3.80 A"/>
    <property type="chains" value="F/G/H=1-1935"/>
</dbReference>
<dbReference type="PDBsum" id="7JH7"/>
<dbReference type="EMDB" id="EMD-22335"/>
<dbReference type="SMR" id="P79293"/>
<dbReference type="FunCoup" id="P79293">
    <property type="interactions" value="56"/>
</dbReference>
<dbReference type="STRING" id="9823.ENSSSCP00000070632"/>
<dbReference type="BindingDB" id="P79293"/>
<dbReference type="ChEMBL" id="CHEMBL4295792"/>
<dbReference type="PaxDb" id="9823-ENSSSCP00000002219"/>
<dbReference type="PeptideAtlas" id="P79293"/>
<dbReference type="ABCD" id="P79293">
    <property type="antibodies" value="1 sequenced antibody"/>
</dbReference>
<dbReference type="Ensembl" id="ENSSSCT00000002271.5">
    <property type="protein sequence ID" value="ENSSSCP00000002219.3"/>
    <property type="gene ID" value="ENSSSCG00000053614.1"/>
</dbReference>
<dbReference type="Ensembl" id="ENSSSCT00060094134.1">
    <property type="protein sequence ID" value="ENSSSCP00060040726.1"/>
    <property type="gene ID" value="ENSSSCG00060067314.1"/>
</dbReference>
<dbReference type="Ensembl" id="ENSSSCT00060094188.1">
    <property type="protein sequence ID" value="ENSSSCP00060040753.1"/>
    <property type="gene ID" value="ENSSSCG00060067314.1"/>
</dbReference>
<dbReference type="Ensembl" id="ENSSSCT00060094233.1">
    <property type="protein sequence ID" value="ENSSSCP00060040767.1"/>
    <property type="gene ID" value="ENSSSCG00060067314.1"/>
</dbReference>
<dbReference type="Ensembl" id="ENSSSCT00070002533.1">
    <property type="protein sequence ID" value="ENSSSCP00070002110.1"/>
    <property type="gene ID" value="ENSSSCG00070000936.1"/>
</dbReference>
<dbReference type="Ensembl" id="ENSSSCT00105034258">
    <property type="protein sequence ID" value="ENSSSCP00105023913"/>
    <property type="gene ID" value="ENSSSCG00105017731"/>
</dbReference>
<dbReference type="Ensembl" id="ENSSSCT00115014284">
    <property type="protein sequence ID" value="ENSSSCP00115013493"/>
    <property type="gene ID" value="ENSSSCG00115008041"/>
</dbReference>
<dbReference type="GeneID" id="396860"/>
<dbReference type="KEGG" id="ssc:396860"/>
<dbReference type="CTD" id="4625"/>
<dbReference type="eggNOG" id="KOG0161">
    <property type="taxonomic scope" value="Eukaryota"/>
</dbReference>
<dbReference type="GeneTree" id="ENSGT00940000159432"/>
<dbReference type="HOGENOM" id="CLU_000192_8_1_1"/>
<dbReference type="InParanoid" id="P79293"/>
<dbReference type="OrthoDB" id="312459at2759"/>
<dbReference type="Proteomes" id="UP000008227">
    <property type="component" value="Chromosome 7"/>
</dbReference>
<dbReference type="Proteomes" id="UP000314985">
    <property type="component" value="Chromosome 7"/>
</dbReference>
<dbReference type="Proteomes" id="UP000694570">
    <property type="component" value="Unplaced"/>
</dbReference>
<dbReference type="Proteomes" id="UP000694571">
    <property type="component" value="Unplaced"/>
</dbReference>
<dbReference type="Proteomes" id="UP000694720">
    <property type="component" value="Unplaced"/>
</dbReference>
<dbReference type="Proteomes" id="UP000694722">
    <property type="component" value="Unplaced"/>
</dbReference>
<dbReference type="Proteomes" id="UP000694723">
    <property type="component" value="Unplaced"/>
</dbReference>
<dbReference type="Proteomes" id="UP000694724">
    <property type="component" value="Unplaced"/>
</dbReference>
<dbReference type="Proteomes" id="UP000694725">
    <property type="component" value="Unplaced"/>
</dbReference>
<dbReference type="Proteomes" id="UP000694726">
    <property type="component" value="Unplaced"/>
</dbReference>
<dbReference type="Proteomes" id="UP000694727">
    <property type="component" value="Unplaced"/>
</dbReference>
<dbReference type="Proteomes" id="UP000694728">
    <property type="component" value="Unplaced"/>
</dbReference>
<dbReference type="Bgee" id="ENSSSCG00000002029">
    <property type="expression patterns" value="Expressed in heart left ventricle and 33 other cell types or tissues"/>
</dbReference>
<dbReference type="ExpressionAtlas" id="P79293">
    <property type="expression patterns" value="baseline and differential"/>
</dbReference>
<dbReference type="GO" id="GO:0005737">
    <property type="term" value="C:cytoplasm"/>
    <property type="evidence" value="ECO:0000318"/>
    <property type="project" value="GO_Central"/>
</dbReference>
<dbReference type="GO" id="GO:0030016">
    <property type="term" value="C:myofibril"/>
    <property type="evidence" value="ECO:0000250"/>
    <property type="project" value="UniProtKB"/>
</dbReference>
<dbReference type="GO" id="GO:0032982">
    <property type="term" value="C:myosin filament"/>
    <property type="evidence" value="ECO:0000250"/>
    <property type="project" value="UniProtKB"/>
</dbReference>
<dbReference type="GO" id="GO:0016460">
    <property type="term" value="C:myosin II complex"/>
    <property type="evidence" value="ECO:0000318"/>
    <property type="project" value="GO_Central"/>
</dbReference>
<dbReference type="GO" id="GO:0030017">
    <property type="term" value="C:sarcomere"/>
    <property type="evidence" value="ECO:0000250"/>
    <property type="project" value="UniProtKB"/>
</dbReference>
<dbReference type="GO" id="GO:0051015">
    <property type="term" value="F:actin filament binding"/>
    <property type="evidence" value="ECO:0000318"/>
    <property type="project" value="GO_Central"/>
</dbReference>
<dbReference type="GO" id="GO:0005524">
    <property type="term" value="F:ATP binding"/>
    <property type="evidence" value="ECO:0007669"/>
    <property type="project" value="UniProtKB-KW"/>
</dbReference>
<dbReference type="GO" id="GO:0005516">
    <property type="term" value="F:calmodulin binding"/>
    <property type="evidence" value="ECO:0007669"/>
    <property type="project" value="UniProtKB-KW"/>
</dbReference>
<dbReference type="GO" id="GO:0000146">
    <property type="term" value="F:microfilament motor activity"/>
    <property type="evidence" value="ECO:0000318"/>
    <property type="project" value="GO_Central"/>
</dbReference>
<dbReference type="GO" id="GO:0007512">
    <property type="term" value="P:adult heart development"/>
    <property type="evidence" value="ECO:0000318"/>
    <property type="project" value="GO_Central"/>
</dbReference>
<dbReference type="GO" id="GO:0060048">
    <property type="term" value="P:cardiac muscle contraction"/>
    <property type="evidence" value="ECO:0000318"/>
    <property type="project" value="GO_Central"/>
</dbReference>
<dbReference type="GO" id="GO:0030049">
    <property type="term" value="P:muscle filament sliding"/>
    <property type="evidence" value="ECO:0000318"/>
    <property type="project" value="GO_Central"/>
</dbReference>
<dbReference type="CDD" id="cd01377">
    <property type="entry name" value="MYSc_class_II"/>
    <property type="match status" value="1"/>
</dbReference>
<dbReference type="FunFam" id="1.10.10.820:FF:000001">
    <property type="entry name" value="Myosin heavy chain"/>
    <property type="match status" value="1"/>
</dbReference>
<dbReference type="FunFam" id="1.20.5.340:FF:000002">
    <property type="entry name" value="Myosin heavy chain"/>
    <property type="match status" value="1"/>
</dbReference>
<dbReference type="FunFam" id="1.20.5.340:FF:000003">
    <property type="entry name" value="Myosin heavy chain"/>
    <property type="match status" value="1"/>
</dbReference>
<dbReference type="FunFam" id="1.20.5.340:FF:000004">
    <property type="entry name" value="Myosin heavy chain"/>
    <property type="match status" value="1"/>
</dbReference>
<dbReference type="FunFam" id="1.20.5.340:FF:000006">
    <property type="entry name" value="Myosin heavy chain"/>
    <property type="match status" value="1"/>
</dbReference>
<dbReference type="FunFam" id="1.20.5.340:FF:000013">
    <property type="entry name" value="Myosin heavy chain"/>
    <property type="match status" value="1"/>
</dbReference>
<dbReference type="FunFam" id="1.20.5.370:FF:000001">
    <property type="entry name" value="Myosin heavy chain"/>
    <property type="match status" value="1"/>
</dbReference>
<dbReference type="FunFam" id="1.20.5.370:FF:000002">
    <property type="entry name" value="Myosin heavy chain"/>
    <property type="match status" value="1"/>
</dbReference>
<dbReference type="FunFam" id="1.20.5.370:FF:000003">
    <property type="entry name" value="Myosin heavy chain"/>
    <property type="match status" value="1"/>
</dbReference>
<dbReference type="FunFam" id="1.20.5.370:FF:000007">
    <property type="entry name" value="Myosin heavy chain"/>
    <property type="match status" value="1"/>
</dbReference>
<dbReference type="FunFam" id="1.20.5.370:FF:000008">
    <property type="entry name" value="Myosin heavy chain"/>
    <property type="match status" value="1"/>
</dbReference>
<dbReference type="FunFam" id="1.20.5.4820:FF:000001">
    <property type="entry name" value="Myosin heavy chain"/>
    <property type="match status" value="1"/>
</dbReference>
<dbReference type="FunFam" id="1.20.58.530:FF:000001">
    <property type="entry name" value="Myosin heavy chain"/>
    <property type="match status" value="1"/>
</dbReference>
<dbReference type="FunFam" id="2.30.30.360:FF:000001">
    <property type="entry name" value="Myosin heavy chain"/>
    <property type="match status" value="1"/>
</dbReference>
<dbReference type="FunFam" id="3.40.850.10:FF:000024">
    <property type="entry name" value="Myosin heavy chain, isoform J"/>
    <property type="match status" value="1"/>
</dbReference>
<dbReference type="FunFam" id="1.20.120.720:FF:000001">
    <property type="entry name" value="Myosin heavy chain, muscle"/>
    <property type="match status" value="1"/>
</dbReference>
<dbReference type="Gene3D" id="1.10.10.820">
    <property type="match status" value="1"/>
</dbReference>
<dbReference type="Gene3D" id="1.20.5.340">
    <property type="match status" value="5"/>
</dbReference>
<dbReference type="Gene3D" id="1.20.5.370">
    <property type="match status" value="4"/>
</dbReference>
<dbReference type="Gene3D" id="1.20.5.4820">
    <property type="match status" value="1"/>
</dbReference>
<dbReference type="Gene3D" id="1.20.58.530">
    <property type="match status" value="1"/>
</dbReference>
<dbReference type="Gene3D" id="6.10.250.2420">
    <property type="match status" value="1"/>
</dbReference>
<dbReference type="Gene3D" id="3.40.850.10">
    <property type="entry name" value="Kinesin motor domain"/>
    <property type="match status" value="1"/>
</dbReference>
<dbReference type="Gene3D" id="2.30.30.360">
    <property type="entry name" value="Myosin S1 fragment, N-terminal"/>
    <property type="match status" value="1"/>
</dbReference>
<dbReference type="Gene3D" id="1.20.120.720">
    <property type="entry name" value="Myosin VI head, motor domain, U50 subdomain"/>
    <property type="match status" value="1"/>
</dbReference>
<dbReference type="InterPro" id="IPR036961">
    <property type="entry name" value="Kinesin_motor_dom_sf"/>
</dbReference>
<dbReference type="InterPro" id="IPR001609">
    <property type="entry name" value="Myosin_head_motor_dom-like"/>
</dbReference>
<dbReference type="InterPro" id="IPR004009">
    <property type="entry name" value="Myosin_N"/>
</dbReference>
<dbReference type="InterPro" id="IPR008989">
    <property type="entry name" value="Myosin_S1_N"/>
</dbReference>
<dbReference type="InterPro" id="IPR002928">
    <property type="entry name" value="Myosin_tail"/>
</dbReference>
<dbReference type="InterPro" id="IPR027417">
    <property type="entry name" value="P-loop_NTPase"/>
</dbReference>
<dbReference type="InterPro" id="IPR014751">
    <property type="entry name" value="XRCC4-like_C"/>
</dbReference>
<dbReference type="PANTHER" id="PTHR45615">
    <property type="entry name" value="MYOSIN HEAVY CHAIN, NON-MUSCLE"/>
    <property type="match status" value="1"/>
</dbReference>
<dbReference type="PANTHER" id="PTHR45615:SF1">
    <property type="entry name" value="MYOSIN-7"/>
    <property type="match status" value="1"/>
</dbReference>
<dbReference type="Pfam" id="PF00063">
    <property type="entry name" value="Myosin_head"/>
    <property type="match status" value="1"/>
</dbReference>
<dbReference type="Pfam" id="PF02736">
    <property type="entry name" value="Myosin_N"/>
    <property type="match status" value="1"/>
</dbReference>
<dbReference type="Pfam" id="PF01576">
    <property type="entry name" value="Myosin_tail_1"/>
    <property type="match status" value="1"/>
</dbReference>
<dbReference type="PRINTS" id="PR00193">
    <property type="entry name" value="MYOSINHEAVY"/>
</dbReference>
<dbReference type="SMART" id="SM00242">
    <property type="entry name" value="MYSc"/>
    <property type="match status" value="1"/>
</dbReference>
<dbReference type="SUPFAM" id="SSF90257">
    <property type="entry name" value="Myosin rod fragments"/>
    <property type="match status" value="5"/>
</dbReference>
<dbReference type="SUPFAM" id="SSF52540">
    <property type="entry name" value="P-loop containing nucleoside triphosphate hydrolases"/>
    <property type="match status" value="1"/>
</dbReference>
<dbReference type="PROSITE" id="PS50096">
    <property type="entry name" value="IQ"/>
    <property type="match status" value="1"/>
</dbReference>
<dbReference type="PROSITE" id="PS51456">
    <property type="entry name" value="MYOSIN_MOTOR"/>
    <property type="match status" value="1"/>
</dbReference>
<dbReference type="PROSITE" id="PS51844">
    <property type="entry name" value="SH3_LIKE"/>
    <property type="match status" value="1"/>
</dbReference>
<accession>P79293</accession>
<accession>Q9GKR1</accession>
<reference key="1">
    <citation type="submission" date="1996-10" db="EMBL/GenBank/DDBJ databases">
        <authorList>
            <person name="Ko Y.-L."/>
        </authorList>
    </citation>
    <scope>NUCLEOTIDE SEQUENCE [MRNA]</scope>
</reference>
<reference key="2">
    <citation type="journal article" date="2002" name="Anim. Sci. J.">
        <title>Comparative sequence analysis of four myosin heavy chain isoforms expressed in porcine skeletal muscles: sequencing and characterization of the porcine myosin heavy chain slow isoform.</title>
        <authorList>
            <person name="Chikuni K."/>
            <person name="Muroya S."/>
            <person name="Tanabe R."/>
            <person name="Nakajima I."/>
        </authorList>
    </citation>
    <scope>NUCLEOTIDE SEQUENCE [MRNA]</scope>
    <source>
        <strain>Landrace</strain>
        <tissue>Skeletal muscle</tissue>
    </source>
</reference>
<protein>
    <recommendedName>
        <fullName>Myosin-7</fullName>
    </recommendedName>
    <alternativeName>
        <fullName>Myosin heavy chain 7</fullName>
    </alternativeName>
    <alternativeName>
        <fullName>Myosin heavy chain slow isoform</fullName>
        <shortName>MyHC-slow</shortName>
    </alternativeName>
    <alternativeName>
        <fullName>Myosin heavy chain, cardiac muscle beta isoform</fullName>
        <shortName>MyHC-beta</shortName>
    </alternativeName>
</protein>
<evidence type="ECO:0000250" key="1">
    <source>
        <dbReference type="UniProtKB" id="P02563"/>
    </source>
</evidence>
<evidence type="ECO:0000250" key="2">
    <source>
        <dbReference type="UniProtKB" id="P02564"/>
    </source>
</evidence>
<evidence type="ECO:0000250" key="3">
    <source>
        <dbReference type="UniProtKB" id="P12883"/>
    </source>
</evidence>
<evidence type="ECO:0000250" key="4">
    <source>
        <dbReference type="UniProtKB" id="Q02566"/>
    </source>
</evidence>
<evidence type="ECO:0000255" key="5"/>
<evidence type="ECO:0000255" key="6">
    <source>
        <dbReference type="PROSITE-ProRule" id="PRU00116"/>
    </source>
</evidence>
<evidence type="ECO:0000255" key="7">
    <source>
        <dbReference type="PROSITE-ProRule" id="PRU00782"/>
    </source>
</evidence>
<evidence type="ECO:0000255" key="8">
    <source>
        <dbReference type="PROSITE-ProRule" id="PRU01190"/>
    </source>
</evidence>
<evidence type="ECO:0000256" key="9">
    <source>
        <dbReference type="SAM" id="MobiDB-lite"/>
    </source>
</evidence>
<evidence type="ECO:0000305" key="10"/>
<feature type="chain" id="PRO_0000123410" description="Myosin-7">
    <location>
        <begin position="1"/>
        <end position="1935"/>
    </location>
</feature>
<feature type="domain" description="Myosin N-terminal SH3-like" evidence="8">
    <location>
        <begin position="32"/>
        <end position="81"/>
    </location>
</feature>
<feature type="domain" description="Myosin motor" evidence="7">
    <location>
        <begin position="85"/>
        <end position="778"/>
    </location>
</feature>
<feature type="domain" description="IQ" evidence="6">
    <location>
        <begin position="781"/>
        <end position="810"/>
    </location>
</feature>
<feature type="region of interest" description="Actin-binding">
    <location>
        <begin position="655"/>
        <end position="677"/>
    </location>
</feature>
<feature type="region of interest" description="Actin-binding">
    <location>
        <begin position="757"/>
        <end position="771"/>
    </location>
</feature>
<feature type="region of interest" description="Disordered" evidence="9">
    <location>
        <begin position="1907"/>
        <end position="1935"/>
    </location>
</feature>
<feature type="coiled-coil region" evidence="5">
    <location>
        <begin position="839"/>
        <end position="1935"/>
    </location>
</feature>
<feature type="compositionally biased region" description="Basic and acidic residues" evidence="9">
    <location>
        <begin position="1923"/>
        <end position="1935"/>
    </location>
</feature>
<feature type="binding site" evidence="5">
    <location>
        <begin position="178"/>
        <end position="185"/>
    </location>
    <ligand>
        <name>ATP</name>
        <dbReference type="ChEBI" id="CHEBI:30616"/>
    </ligand>
</feature>
<feature type="modified residue" description="N6,N6,N6-trimethyllysine" evidence="5">
    <location>
        <position position="129"/>
    </location>
</feature>
<feature type="modified residue" description="Phosphothreonine" evidence="1">
    <location>
        <position position="378"/>
    </location>
</feature>
<feature type="modified residue" description="Phosphoserine" evidence="1">
    <location>
        <position position="1137"/>
    </location>
</feature>
<feature type="modified residue" description="Phosphoserine" evidence="4">
    <location>
        <position position="1269"/>
    </location>
</feature>
<feature type="modified residue" description="Phosphothreonine" evidence="1">
    <location>
        <position position="1282"/>
    </location>
</feature>
<feature type="modified residue" description="Phosphotyrosine" evidence="1">
    <location>
        <position position="1308"/>
    </location>
</feature>
<feature type="modified residue" description="Phosphothreonine" evidence="1">
    <location>
        <position position="1309"/>
    </location>
</feature>
<feature type="modified residue" description="Phosphoserine" evidence="2">
    <location>
        <position position="1510"/>
    </location>
</feature>
<feature type="modified residue" description="Phosphothreonine" evidence="1">
    <location>
        <position position="1513"/>
    </location>
</feature>
<feature type="sequence conflict" description="In Ref. 1; AAB37320." evidence="10" ref="1">
    <original>E</original>
    <variation>D</variation>
    <location>
        <position position="149"/>
    </location>
</feature>
<feature type="sequence conflict" description="In Ref. 1; AAB37320." evidence="10" ref="1">
    <original>K</original>
    <variation>E</variation>
    <location>
        <position position="841"/>
    </location>
</feature>
<feature type="sequence conflict" description="In Ref. 1; AAB37320." evidence="10" ref="1">
    <original>ADA</original>
    <variation>SDS</variation>
    <location>
        <begin position="899"/>
        <end position="901"/>
    </location>
</feature>
<feature type="sequence conflict" description="In Ref. 1; AAB37320." evidence="10" ref="1">
    <original>KL</original>
    <variation>NV</variation>
    <location>
        <begin position="942"/>
        <end position="943"/>
    </location>
</feature>
<feature type="sequence conflict" description="In Ref. 1; AAB37320." evidence="10" ref="1">
    <original>E</original>
    <variation>A</variation>
    <location>
        <position position="1035"/>
    </location>
</feature>
<feature type="sequence conflict" description="In Ref. 1; AAB37320." evidence="10" ref="1">
    <original>DC</original>
    <variation>AA</variation>
    <location>
        <begin position="1339"/>
        <end position="1340"/>
    </location>
</feature>
<feature type="sequence conflict" description="In Ref. 1; AAB37320." evidence="10" ref="1">
    <original>A</original>
    <variation>T</variation>
    <location>
        <position position="1353"/>
    </location>
</feature>
<feature type="sequence conflict" description="In Ref. 1; AAB37320." evidence="10" ref="1">
    <original>F</original>
    <variation>S</variation>
    <location>
        <position position="1498"/>
    </location>
</feature>
<feature type="sequence conflict" description="In Ref. 1; AAB37320." evidence="10" ref="1">
    <original>A</original>
    <variation>S</variation>
    <location>
        <position position="1547"/>
    </location>
</feature>
<feature type="sequence conflict" description="In Ref. 1; AAB37320." evidence="10" ref="1">
    <original>C</original>
    <variation>S</variation>
    <location>
        <position position="1748"/>
    </location>
</feature>
<feature type="sequence conflict" description="In Ref. 1; AAB37320." evidence="10" ref="1">
    <original>K</original>
    <variation>N</variation>
    <location>
        <position position="1879"/>
    </location>
</feature>
<organism>
    <name type="scientific">Sus scrofa</name>
    <name type="common">Pig</name>
    <dbReference type="NCBI Taxonomy" id="9823"/>
    <lineage>
        <taxon>Eukaryota</taxon>
        <taxon>Metazoa</taxon>
        <taxon>Chordata</taxon>
        <taxon>Craniata</taxon>
        <taxon>Vertebrata</taxon>
        <taxon>Euteleostomi</taxon>
        <taxon>Mammalia</taxon>
        <taxon>Eutheria</taxon>
        <taxon>Laurasiatheria</taxon>
        <taxon>Artiodactyla</taxon>
        <taxon>Suina</taxon>
        <taxon>Suidae</taxon>
        <taxon>Sus</taxon>
    </lineage>
</organism>
<keyword id="KW-0002">3D-structure</keyword>
<keyword id="KW-0009">Actin-binding</keyword>
<keyword id="KW-0067">ATP-binding</keyword>
<keyword id="KW-0112">Calmodulin-binding</keyword>
<keyword id="KW-0175">Coiled coil</keyword>
<keyword id="KW-0963">Cytoplasm</keyword>
<keyword id="KW-0488">Methylation</keyword>
<keyword id="KW-0505">Motor protein</keyword>
<keyword id="KW-0514">Muscle protein</keyword>
<keyword id="KW-0518">Myosin</keyword>
<keyword id="KW-0547">Nucleotide-binding</keyword>
<keyword id="KW-0597">Phosphoprotein</keyword>
<keyword id="KW-1185">Reference proteome</keyword>
<keyword id="KW-0787">Thick filament</keyword>
<name>MYH7_PIG</name>
<sequence length="1935" mass="223298">MVDAEMAAFGEAAPYLRKSEKERLEAQTRPFDLKKDVYVPDDKEEFVKAKILSREGGKVTAETEHGKTVTVKEDQVLQQNPPKFDKIEDMAMLTFLHEPAVLYNLKERYASWMIYTYSGLFCVTINPYKWLPVYNAEVVAAYRGKKRSEAPPHIFSISDNAYQYMLTDRENQSILITGESGAGKTVNTKRVIQYFAVIAAIGDRSKKEQTPGKGTLEDQIIQANPALEAFGNAKTVRNDNSSRFGKFIRIHFGATGKLASADIETYLLEKSRVIFQLKAERDYHIFYQILSNKKPELLDMLLITNNPYDYAFISQGETTVASIDDAEELMATDNAFDVLGFTSEEKNSMYKLTGAIMHFGNMKFKLKQREEQAEPDGTEEADKSAYLMGLNSADLLKGLCHPRVKVGNEYVTKGQNVQQVMYATGALAKAVYEKMFNWMVTRINTTLETKQPRQYFIGVLDIAGFEIFDFNSFEQLCINFTNEKLQQFFNHHMFVLEQEEYKKEGIEWEFIDFGMDLQACIDLIEKPMGIMSILEEECMFPKATDMTFKAKLYDNHLGKSNNFQKPRNIKGRPEAHFALIHYAGTVDYNIIGWLQKNKDPLNETVVDLYKKSSLKLLSNLFANYAGADTPVEKGKGKAKKGSSFQTVSALHRENLNKLMTNLRSTHPHFVRCIIPNETKSPGVIDNPLVMHQLRCNGVLEGIRICRKGFPNRILYGDFRQRYRILNPAAIPEGQFIDSRKGAEKLLGSLDIDHNQYKFGHTKVFFKAGLLGLLEEMRDERLSRIITRIQAQSRGVLSRMEFKKLLERRDSLLIIQWNIRAFMSVKNWPWMKLYFKIKPLLKSAETEKEMATMKEEFGRLKEALEKSEARRKELEEKMVSLLQEKNDLQLQVQAEQDNLADAEERCDQLIKNKIQLEAKVKEMTERLEDEEEMNAELTAKKRKLEDECSELKRDIDDLELTLAKVEKEKHATENKVKNLTEEMAGLDEIIAKLTKEKKALQEAHQQALDDLQAEEDKVNTLTKAKVKLEQHVDDLEGSLEQEKKVRMDLERAKRKLEGDLKLTQESIMDLENDKQQLDERLKKKDFELNALNARIEDEQALGSQLQKKLKELQARIEELEEELEAERTARAKVEKLRSDLSRELEEISERLEEAGGATSVQIEMNKKREAEFQKMRRDLEEATLQHEATAAALRKKHADSVAELGEQIDNLQRVKQKLEKEKSEFKLELDDVTSNMEQIIKAKANLEKMCRTLEDQMNEHRSKAEETQRSVNDLTSQRAKLQTENGELSRQLDEKEALISQLTRGKLTYTQQLEDLKRQLEEEVKAKNALAHALQSARHDCDLLREQYEEETEAKAELQRVLSKANSEVAQWRTKYETDAIQRTEELEEAKKKLAQRLQDAEEAVEAVNAKCSSLEKTKHRLQNEIEDLMVDVERSNAAAAALDKKQRNFDKILAEWKQKYEESQSELESSQKEARSLSTELFKLKNAYEESLEHLETFKRENKNLQEEISDLTEQLGSSGKTIHELEKVRKQLEAEKLELQSALEEAEASLEHEEGKILRAQLEFNQIKAEMERKLAEKDEEMEQAKRNHLRVVDSLQTSLDAETRSRNEALRVKKKMEGDLNEMEIQLSHANRMAAEAQKQVKSLQSLLKDTQIQLDDAVRANDDLKENIAIVERRNNLLQAELEELRAVVEQTERSRKLAEQELIETSERVQLLHSQNTSLINQKKKMEADLSQLQTEVEEAVQECRNAEEKAKKAITDAAMMAEELKKEQDTSAHLERMKKNMEQTIKDLQHRLDEAEQIALKGGKKQLQKLEARVRELENELEAEQKRNAESVKGMRKSERRIKELTYQTEEDRKNLLRLQDLVDKLQLKVKAYKRQAEEAEEQANTNLSKFRKVQHELDEAEERADIAESQVNKLRAKSRDIGTKGLNEE</sequence>
<proteinExistence type="evidence at protein level"/>